<proteinExistence type="evidence at transcript level"/>
<name>DRD3_CHLAE</name>
<protein>
    <recommendedName>
        <fullName>D(3) dopamine receptor</fullName>
    </recommendedName>
    <alternativeName>
        <fullName>Dopamine D3 receptor</fullName>
    </alternativeName>
</protein>
<dbReference type="EMBL" id="U21307">
    <property type="protein sequence ID" value="AAA75379.1"/>
    <property type="molecule type" value="mRNA"/>
</dbReference>
<dbReference type="PIR" id="G00013">
    <property type="entry name" value="G00013"/>
</dbReference>
<dbReference type="SMR" id="P52703"/>
<dbReference type="BindingDB" id="P52703"/>
<dbReference type="ChEMBL" id="CHEMBL2304406"/>
<dbReference type="DrugCentral" id="P52703"/>
<dbReference type="GlyCosmos" id="P52703">
    <property type="glycosylation" value="4 sites, No reported glycans"/>
</dbReference>
<dbReference type="GO" id="GO:0005886">
    <property type="term" value="C:plasma membrane"/>
    <property type="evidence" value="ECO:0007669"/>
    <property type="project" value="UniProtKB-SubCell"/>
</dbReference>
<dbReference type="GO" id="GO:0045202">
    <property type="term" value="C:synapse"/>
    <property type="evidence" value="ECO:0007669"/>
    <property type="project" value="GOC"/>
</dbReference>
<dbReference type="GO" id="GO:0001591">
    <property type="term" value="F:dopamine neurotransmitter receptor activity, coupled via Gi/Go"/>
    <property type="evidence" value="ECO:0007669"/>
    <property type="project" value="TreeGrafter"/>
</dbReference>
<dbReference type="GO" id="GO:0004930">
    <property type="term" value="F:G protein-coupled receptor activity"/>
    <property type="evidence" value="ECO:0007669"/>
    <property type="project" value="UniProtKB-KW"/>
</dbReference>
<dbReference type="GO" id="GO:0007195">
    <property type="term" value="P:adenylate cyclase-inhibiting dopamine receptor signaling pathway"/>
    <property type="evidence" value="ECO:0007669"/>
    <property type="project" value="InterPro"/>
</dbReference>
<dbReference type="GO" id="GO:0051481">
    <property type="term" value="P:negative regulation of cytosolic calcium ion concentration"/>
    <property type="evidence" value="ECO:0007669"/>
    <property type="project" value="TreeGrafter"/>
</dbReference>
<dbReference type="GO" id="GO:0051967">
    <property type="term" value="P:negative regulation of synaptic transmission, glutamatergic"/>
    <property type="evidence" value="ECO:0007669"/>
    <property type="project" value="TreeGrafter"/>
</dbReference>
<dbReference type="GO" id="GO:0060158">
    <property type="term" value="P:phospholipase C-activating dopamine receptor signaling pathway"/>
    <property type="evidence" value="ECO:0007669"/>
    <property type="project" value="TreeGrafter"/>
</dbReference>
<dbReference type="GO" id="GO:0014059">
    <property type="term" value="P:regulation of dopamine secretion"/>
    <property type="evidence" value="ECO:0007669"/>
    <property type="project" value="TreeGrafter"/>
</dbReference>
<dbReference type="GO" id="GO:0043266">
    <property type="term" value="P:regulation of potassium ion transport"/>
    <property type="evidence" value="ECO:0007669"/>
    <property type="project" value="TreeGrafter"/>
</dbReference>
<dbReference type="CDD" id="cd15310">
    <property type="entry name" value="7tmA_D3_dopamine_R"/>
    <property type="match status" value="1"/>
</dbReference>
<dbReference type="FunFam" id="1.20.1070.10:FF:000424">
    <property type="entry name" value="D(3) dopamine receptor"/>
    <property type="match status" value="1"/>
</dbReference>
<dbReference type="FunFam" id="1.20.1070.10:FF:000287">
    <property type="entry name" value="Dopamine receptor D3"/>
    <property type="match status" value="1"/>
</dbReference>
<dbReference type="Gene3D" id="1.20.1070.10">
    <property type="entry name" value="Rhodopsin 7-helix transmembrane proteins"/>
    <property type="match status" value="1"/>
</dbReference>
<dbReference type="InterPro" id="IPR001620">
    <property type="entry name" value="Dopamine_D3_rcpt"/>
</dbReference>
<dbReference type="InterPro" id="IPR000929">
    <property type="entry name" value="Dopamine_rcpt"/>
</dbReference>
<dbReference type="InterPro" id="IPR000276">
    <property type="entry name" value="GPCR_Rhodpsn"/>
</dbReference>
<dbReference type="InterPro" id="IPR017452">
    <property type="entry name" value="GPCR_Rhodpsn_7TM"/>
</dbReference>
<dbReference type="PANTHER" id="PTHR24248">
    <property type="entry name" value="ADRENERGIC RECEPTOR-RELATED G-PROTEIN COUPLED RECEPTOR"/>
    <property type="match status" value="1"/>
</dbReference>
<dbReference type="PANTHER" id="PTHR24248:SF154">
    <property type="entry name" value="D(3) DOPAMINE RECEPTOR"/>
    <property type="match status" value="1"/>
</dbReference>
<dbReference type="Pfam" id="PF00001">
    <property type="entry name" value="7tm_1"/>
    <property type="match status" value="1"/>
</dbReference>
<dbReference type="PRINTS" id="PR00568">
    <property type="entry name" value="DOPAMINED3R"/>
</dbReference>
<dbReference type="PRINTS" id="PR00242">
    <property type="entry name" value="DOPAMINER"/>
</dbReference>
<dbReference type="PRINTS" id="PR00237">
    <property type="entry name" value="GPCRRHODOPSN"/>
</dbReference>
<dbReference type="SMART" id="SM01381">
    <property type="entry name" value="7TM_GPCR_Srsx"/>
    <property type="match status" value="1"/>
</dbReference>
<dbReference type="SUPFAM" id="SSF81321">
    <property type="entry name" value="Family A G protein-coupled receptor-like"/>
    <property type="match status" value="1"/>
</dbReference>
<dbReference type="PROSITE" id="PS00237">
    <property type="entry name" value="G_PROTEIN_RECEP_F1_1"/>
    <property type="match status" value="1"/>
</dbReference>
<dbReference type="PROSITE" id="PS50262">
    <property type="entry name" value="G_PROTEIN_RECEP_F1_2"/>
    <property type="match status" value="1"/>
</dbReference>
<reference key="1">
    <citation type="submission" date="1995-02" db="EMBL/GenBank/DDBJ databases">
        <authorList>
            <person name="Ross P.C."/>
        </authorList>
    </citation>
    <scope>NUCLEOTIDE SEQUENCE [MRNA]</scope>
    <source>
        <tissue>Brain</tissue>
    </source>
</reference>
<organism>
    <name type="scientific">Chlorocebus aethiops</name>
    <name type="common">Green monkey</name>
    <name type="synonym">Cercopithecus aethiops</name>
    <dbReference type="NCBI Taxonomy" id="9534"/>
    <lineage>
        <taxon>Eukaryota</taxon>
        <taxon>Metazoa</taxon>
        <taxon>Chordata</taxon>
        <taxon>Craniata</taxon>
        <taxon>Vertebrata</taxon>
        <taxon>Euteleostomi</taxon>
        <taxon>Mammalia</taxon>
        <taxon>Eutheria</taxon>
        <taxon>Euarchontoglires</taxon>
        <taxon>Primates</taxon>
        <taxon>Haplorrhini</taxon>
        <taxon>Catarrhini</taxon>
        <taxon>Cercopithecidae</taxon>
        <taxon>Cercopithecinae</taxon>
        <taxon>Chlorocebus</taxon>
    </lineage>
</organism>
<sequence length="400" mass="44336">MAPLSQLSGHLNYTCGVENSTGASQARPHAYYALSYCALILAIVFGNGLVCMAVLKERALQTTTNYLVVSLAVADLLVATLVMPWVVYLEVTGGVWNFSRVCCDVFVTLDVMMCTASILNLCAISIDRYTAVVMPVHYQHGTGQSSCRRVTLMITAVWVLAFAVSCPLLFGFNTTGDPTVCSISNPDFVIYSSVVSFYLPFGVTVLVYARIYVVLKQRRRKRILTRQNSQCNSVRPGFPQQTLSPDRAHLELKRYYSICQDTALGGPGFQERGGELKREERTRNSLSPTIAPKLSLEVRKLSNGRLSTSLKLGPLQPRGVPLREKKATQMVAIVLGAFIVCWLPFFLTHVLNTHCQTCHVSPELYSATTWLGYVNSALNPVIYTTFNIEFRKAFLKILSC</sequence>
<gene>
    <name type="primary">DRD3</name>
</gene>
<accession>P52703</accession>
<evidence type="ECO:0000250" key="1"/>
<evidence type="ECO:0000250" key="2">
    <source>
        <dbReference type="UniProtKB" id="P19020"/>
    </source>
</evidence>
<evidence type="ECO:0000250" key="3">
    <source>
        <dbReference type="UniProtKB" id="P35462"/>
    </source>
</evidence>
<evidence type="ECO:0000255" key="4"/>
<evidence type="ECO:0000255" key="5">
    <source>
        <dbReference type="PROSITE-ProRule" id="PRU00521"/>
    </source>
</evidence>
<feature type="chain" id="PRO_0000069396" description="D(3) dopamine receptor">
    <location>
        <begin position="1"/>
        <end position="400"/>
    </location>
</feature>
<feature type="topological domain" description="Extracellular" evidence="3">
    <location>
        <begin position="1"/>
        <end position="32"/>
    </location>
</feature>
<feature type="transmembrane region" description="Helical; Name=1" evidence="3">
    <location>
        <begin position="33"/>
        <end position="55"/>
    </location>
</feature>
<feature type="topological domain" description="Cytoplasmic" evidence="3">
    <location>
        <begin position="56"/>
        <end position="65"/>
    </location>
</feature>
<feature type="transmembrane region" description="Helical; Name=2" evidence="3">
    <location>
        <begin position="66"/>
        <end position="88"/>
    </location>
</feature>
<feature type="topological domain" description="Extracellular" evidence="3">
    <location>
        <begin position="89"/>
        <end position="104"/>
    </location>
</feature>
<feature type="transmembrane region" description="Helical; Name=3" evidence="3">
    <location>
        <begin position="105"/>
        <end position="126"/>
    </location>
</feature>
<feature type="topological domain" description="Cytoplasmic" evidence="3">
    <location>
        <begin position="127"/>
        <end position="149"/>
    </location>
</feature>
<feature type="transmembrane region" description="Helical; Name=4" evidence="3">
    <location>
        <begin position="150"/>
        <end position="170"/>
    </location>
</feature>
<feature type="topological domain" description="Extracellular" evidence="3">
    <location>
        <begin position="171"/>
        <end position="187"/>
    </location>
</feature>
<feature type="transmembrane region" description="Helical; Name=5" evidence="3">
    <location>
        <begin position="188"/>
        <end position="209"/>
    </location>
</feature>
<feature type="topological domain" description="Cytoplasmic" evidence="3">
    <location>
        <begin position="210"/>
        <end position="329"/>
    </location>
</feature>
<feature type="transmembrane region" description="Helical; Name=6" evidence="3">
    <location>
        <begin position="330"/>
        <end position="351"/>
    </location>
</feature>
<feature type="topological domain" description="Extracellular" evidence="3">
    <location>
        <begin position="352"/>
        <end position="366"/>
    </location>
</feature>
<feature type="transmembrane region" description="Helical; Name=7" evidence="3">
    <location>
        <begin position="367"/>
        <end position="386"/>
    </location>
</feature>
<feature type="topological domain" description="Cytoplasmic" evidence="3">
    <location>
        <begin position="387"/>
        <end position="400"/>
    </location>
</feature>
<feature type="glycosylation site" description="N-linked (GlcNAc...) asparagine" evidence="4">
    <location>
        <position position="12"/>
    </location>
</feature>
<feature type="glycosylation site" description="N-linked (GlcNAc...) asparagine" evidence="4">
    <location>
        <position position="19"/>
    </location>
</feature>
<feature type="glycosylation site" description="N-linked (GlcNAc...) asparagine" evidence="4">
    <location>
        <position position="97"/>
    </location>
</feature>
<feature type="glycosylation site" description="N-linked (GlcNAc...) asparagine" evidence="4">
    <location>
        <position position="173"/>
    </location>
</feature>
<feature type="disulfide bond" evidence="5">
    <location>
        <begin position="103"/>
        <end position="181"/>
    </location>
</feature>
<feature type="disulfide bond" evidence="5">
    <location>
        <begin position="355"/>
        <end position="358"/>
    </location>
</feature>
<comment type="function">
    <text evidence="1">Dopamine receptor whose activity is mediated by G proteins which inhibit adenylyl cyclase. Promotes cell proliferation (By similarity).</text>
</comment>
<comment type="subunit">
    <text evidence="2 3">Interacts with CLIC6 (By similarity). Interacts with GRK4. Interacts with PALM. Interacts with FLNA (via filamin repeat 21); increases PKA-mediated phosphorylation of FLNA (By similarity).</text>
</comment>
<comment type="subcellular location">
    <subcellularLocation>
        <location>Cell membrane</location>
        <topology>Multi-pass membrane protein</topology>
    </subcellularLocation>
</comment>
<comment type="PTM">
    <text evidence="3">Phosphorylated by GRK4.</text>
</comment>
<comment type="PTM">
    <text evidence="3">Palmitoylated.</text>
</comment>
<comment type="similarity">
    <text evidence="5">Belongs to the G-protein coupled receptor 1 family.</text>
</comment>
<keyword id="KW-1003">Cell membrane</keyword>
<keyword id="KW-1015">Disulfide bond</keyword>
<keyword id="KW-0297">G-protein coupled receptor</keyword>
<keyword id="KW-0325">Glycoprotein</keyword>
<keyword id="KW-0449">Lipoprotein</keyword>
<keyword id="KW-0472">Membrane</keyword>
<keyword id="KW-0564">Palmitate</keyword>
<keyword id="KW-0675">Receptor</keyword>
<keyword id="KW-0807">Transducer</keyword>
<keyword id="KW-0812">Transmembrane</keyword>
<keyword id="KW-1133">Transmembrane helix</keyword>